<sequence length="420" mass="47856">MSKIKVVHPIVEMDGDEQTRVIWKLIKEKLILPYLDVDLKYYDLSIQERDRTNDQVTKDSSYATLKYGVAVKCATITPDEARMKEFNLKEMWKSPNGTIRNILGGTVFREPIIIPKIPRLVPHWEKPIIIGRHAFGDQYRATDIKIKKAGKLRLQFSSDDGKENIDLKVYEFPKSGGIAMAMFNTNDSIKGFAKASFELALKRKLPLFFTTKNTILKNYDNQFKQIFDNLFDKEYKEKFQALKITYEHRLIDDMVAQMLKSKGGFIIAMKNYDGDVQSDIVAQGFGSLGLMTSILITPDGKTFESEAAHGTVTRHFRKHQRGEETSTNSIASIFAWTRAIIQRGKLDNTDDVIKFGNLLEKATLDTVQVGGKMTKDLALMLGKTNRSSYVTTEEFIDEVAKRLQNMMLSSNEDKKGMCKL</sequence>
<reference key="1">
    <citation type="journal article" date="1997" name="Nature">
        <title>The nucleotide sequence of Saccharomyces cerevisiae chromosome XIV and its evolutionary implications.</title>
        <authorList>
            <person name="Philippsen P."/>
            <person name="Kleine K."/>
            <person name="Poehlmann R."/>
            <person name="Duesterhoeft A."/>
            <person name="Hamberg K."/>
            <person name="Hegemann J.H."/>
            <person name="Obermaier B."/>
            <person name="Urrestarazu L.A."/>
            <person name="Aert R."/>
            <person name="Albermann K."/>
            <person name="Altmann R."/>
            <person name="Andre B."/>
            <person name="Baladron V."/>
            <person name="Ballesta J.P.G."/>
            <person name="Becam A.-M."/>
            <person name="Beinhauer J.D."/>
            <person name="Boskovic J."/>
            <person name="Buitrago M.J."/>
            <person name="Bussereau F."/>
            <person name="Coster F."/>
            <person name="Crouzet M."/>
            <person name="D'Angelo M."/>
            <person name="Dal Pero F."/>
            <person name="De Antoni A."/>
            <person name="del Rey F."/>
            <person name="Doignon F."/>
            <person name="Domdey H."/>
            <person name="Dubois E."/>
            <person name="Fiedler T.A."/>
            <person name="Fleig U."/>
            <person name="Floeth M."/>
            <person name="Fritz C."/>
            <person name="Gaillardin C."/>
            <person name="Garcia-Cantalejo J.M."/>
            <person name="Glansdorff N."/>
            <person name="Goffeau A."/>
            <person name="Gueldener U."/>
            <person name="Herbert C.J."/>
            <person name="Heumann K."/>
            <person name="Heuss-Neitzel D."/>
            <person name="Hilbert H."/>
            <person name="Hinni K."/>
            <person name="Iraqui Houssaini I."/>
            <person name="Jacquet M."/>
            <person name="Jimenez A."/>
            <person name="Jonniaux J.-L."/>
            <person name="Karpfinger-Hartl L."/>
            <person name="Lanfranchi G."/>
            <person name="Lepingle A."/>
            <person name="Levesque H."/>
            <person name="Lyck R."/>
            <person name="Maftahi M."/>
            <person name="Mallet L."/>
            <person name="Maurer C.T.C."/>
            <person name="Messenguy F."/>
            <person name="Mewes H.-W."/>
            <person name="Moestl D."/>
            <person name="Nasr F."/>
            <person name="Nicaud J.-M."/>
            <person name="Niedenthal R.K."/>
            <person name="Pandolfo D."/>
            <person name="Pierard A."/>
            <person name="Piravandi E."/>
            <person name="Planta R.J."/>
            <person name="Pohl T.M."/>
            <person name="Purnelle B."/>
            <person name="Rebischung C."/>
            <person name="Remacha M.A."/>
            <person name="Revuelta J.L."/>
            <person name="Rinke M."/>
            <person name="Saiz J.E."/>
            <person name="Sartorello F."/>
            <person name="Scherens B."/>
            <person name="Sen-Gupta M."/>
            <person name="Soler-Mira A."/>
            <person name="Urbanus J.H.M."/>
            <person name="Valle G."/>
            <person name="Van Dyck L."/>
            <person name="Verhasselt P."/>
            <person name="Vierendeels F."/>
            <person name="Vissers S."/>
            <person name="Voet M."/>
            <person name="Volckaert G."/>
            <person name="Wach A."/>
            <person name="Wambutt R."/>
            <person name="Wedler H."/>
            <person name="Zollner A."/>
            <person name="Hani J."/>
        </authorList>
    </citation>
    <scope>NUCLEOTIDE SEQUENCE [LARGE SCALE GENOMIC DNA]</scope>
    <source>
        <strain>ATCC 204508 / S288c</strain>
    </source>
</reference>
<reference key="2">
    <citation type="journal article" date="2014" name="G3 (Bethesda)">
        <title>The reference genome sequence of Saccharomyces cerevisiae: Then and now.</title>
        <authorList>
            <person name="Engel S.R."/>
            <person name="Dietrich F.S."/>
            <person name="Fisk D.G."/>
            <person name="Binkley G."/>
            <person name="Balakrishnan R."/>
            <person name="Costanzo M.C."/>
            <person name="Dwight S.S."/>
            <person name="Hitz B.C."/>
            <person name="Karra K."/>
            <person name="Nash R.S."/>
            <person name="Weng S."/>
            <person name="Wong E.D."/>
            <person name="Lloyd P."/>
            <person name="Skrzypek M.S."/>
            <person name="Miyasato S.R."/>
            <person name="Simison M."/>
            <person name="Cherry J.M."/>
        </authorList>
    </citation>
    <scope>GENOME REANNOTATION</scope>
    <source>
        <strain>ATCC 204508 / S288c</strain>
    </source>
</reference>
<reference key="3">
    <citation type="journal article" date="2007" name="Genome Res.">
        <title>Approaching a complete repository of sequence-verified protein-encoding clones for Saccharomyces cerevisiae.</title>
        <authorList>
            <person name="Hu Y."/>
            <person name="Rolfs A."/>
            <person name="Bhullar B."/>
            <person name="Murthy T.V.S."/>
            <person name="Zhu C."/>
            <person name="Berger M.F."/>
            <person name="Camargo A.A."/>
            <person name="Kelley F."/>
            <person name="McCarron S."/>
            <person name="Jepson D."/>
            <person name="Richardson A."/>
            <person name="Raphael J."/>
            <person name="Moreira D."/>
            <person name="Taycher E."/>
            <person name="Zuo D."/>
            <person name="Mohr S."/>
            <person name="Kane M.F."/>
            <person name="Williamson J."/>
            <person name="Simpson A.J.G."/>
            <person name="Bulyk M.L."/>
            <person name="Harlow E."/>
            <person name="Marsischky G."/>
            <person name="Kolodner R.D."/>
            <person name="LaBaer J."/>
        </authorList>
    </citation>
    <scope>NUCLEOTIDE SEQUENCE [GENOMIC DNA]</scope>
    <source>
        <strain>ATCC 204508 / S288c</strain>
    </source>
</reference>
<protein>
    <recommendedName>
        <fullName>Isocitrate dehydrogenase [NADP]</fullName>
        <shortName>IDH</shortName>
        <ecNumber>1.1.1.42</ecNumber>
    </recommendedName>
    <alternativeName>
        <fullName>IDP</fullName>
    </alternativeName>
    <alternativeName>
        <fullName>NADP(+)-specific ICDH</fullName>
    </alternativeName>
    <alternativeName>
        <fullName>Oxalosuccinate decarboxylase</fullName>
    </alternativeName>
</protein>
<gene>
    <name type="primary">IDP3</name>
    <name type="ordered locus">YNL009W</name>
    <name type="ORF">N2870</name>
</gene>
<feature type="chain" id="PRO_0000083588" description="Isocitrate dehydrogenase [NADP]">
    <location>
        <begin position="1"/>
        <end position="420"/>
    </location>
</feature>
<feature type="binding site" evidence="1">
    <location>
        <begin position="75"/>
        <end position="77"/>
    </location>
    <ligand>
        <name>NADP(+)</name>
        <dbReference type="ChEBI" id="CHEBI:58349"/>
    </ligand>
</feature>
<feature type="binding site" evidence="1">
    <location>
        <position position="77"/>
    </location>
    <ligand>
        <name>substrate</name>
    </ligand>
</feature>
<feature type="binding site" evidence="1">
    <location>
        <position position="82"/>
    </location>
    <ligand>
        <name>NADP(+)</name>
        <dbReference type="ChEBI" id="CHEBI:58349"/>
    </ligand>
</feature>
<feature type="binding site" evidence="1">
    <location>
        <begin position="94"/>
        <end position="100"/>
    </location>
    <ligand>
        <name>substrate</name>
    </ligand>
</feature>
<feature type="binding site" evidence="1">
    <location>
        <position position="109"/>
    </location>
    <ligand>
        <name>substrate</name>
    </ligand>
</feature>
<feature type="binding site" evidence="1">
    <location>
        <position position="132"/>
    </location>
    <ligand>
        <name>substrate</name>
    </ligand>
</feature>
<feature type="binding site" evidence="1">
    <location>
        <position position="252"/>
    </location>
    <ligand>
        <name>Mn(2+)</name>
        <dbReference type="ChEBI" id="CHEBI:29035"/>
    </ligand>
</feature>
<feature type="binding site" evidence="1">
    <location>
        <position position="260"/>
    </location>
    <ligand>
        <name>NADP(+)</name>
        <dbReference type="ChEBI" id="CHEBI:58349"/>
    </ligand>
</feature>
<feature type="binding site" evidence="1">
    <location>
        <position position="275"/>
    </location>
    <ligand>
        <name>Mn(2+)</name>
        <dbReference type="ChEBI" id="CHEBI:29035"/>
    </ligand>
</feature>
<feature type="binding site" evidence="1">
    <location>
        <begin position="310"/>
        <end position="315"/>
    </location>
    <ligand>
        <name>NADP(+)</name>
        <dbReference type="ChEBI" id="CHEBI:58349"/>
    </ligand>
</feature>
<feature type="binding site" evidence="1">
    <location>
        <position position="328"/>
    </location>
    <ligand>
        <name>NADP(+)</name>
        <dbReference type="ChEBI" id="CHEBI:58349"/>
    </ligand>
</feature>
<feature type="site" description="Critical for catalysis" evidence="1">
    <location>
        <position position="139"/>
    </location>
</feature>
<feature type="site" description="Critical for catalysis" evidence="1">
    <location>
        <position position="212"/>
    </location>
</feature>
<proteinExistence type="inferred from homology"/>
<organism>
    <name type="scientific">Saccharomyces cerevisiae (strain ATCC 204508 / S288c)</name>
    <name type="common">Baker's yeast</name>
    <dbReference type="NCBI Taxonomy" id="559292"/>
    <lineage>
        <taxon>Eukaryota</taxon>
        <taxon>Fungi</taxon>
        <taxon>Dikarya</taxon>
        <taxon>Ascomycota</taxon>
        <taxon>Saccharomycotina</taxon>
        <taxon>Saccharomycetes</taxon>
        <taxon>Saccharomycetales</taxon>
        <taxon>Saccharomycetaceae</taxon>
        <taxon>Saccharomyces</taxon>
    </lineage>
</organism>
<keyword id="KW-0329">Glyoxylate bypass</keyword>
<keyword id="KW-0460">Magnesium</keyword>
<keyword id="KW-0464">Manganese</keyword>
<keyword id="KW-0479">Metal-binding</keyword>
<keyword id="KW-0521">NADP</keyword>
<keyword id="KW-0560">Oxidoreductase</keyword>
<keyword id="KW-1185">Reference proteome</keyword>
<keyword id="KW-0816">Tricarboxylic acid cycle</keyword>
<accession>P53982</accession>
<accession>D6W1G8</accession>
<name>IDHH_YEAST</name>
<comment type="function">
    <text>May function in the production of NADPH for fatty acid and sterol synthesis.</text>
</comment>
<comment type="catalytic activity">
    <reaction>
        <text>D-threo-isocitrate + NADP(+) = 2-oxoglutarate + CO2 + NADPH</text>
        <dbReference type="Rhea" id="RHEA:19629"/>
        <dbReference type="ChEBI" id="CHEBI:15562"/>
        <dbReference type="ChEBI" id="CHEBI:16526"/>
        <dbReference type="ChEBI" id="CHEBI:16810"/>
        <dbReference type="ChEBI" id="CHEBI:57783"/>
        <dbReference type="ChEBI" id="CHEBI:58349"/>
        <dbReference type="EC" id="1.1.1.42"/>
    </reaction>
</comment>
<comment type="cofactor">
    <cofactor evidence="1">
        <name>Mg(2+)</name>
        <dbReference type="ChEBI" id="CHEBI:18420"/>
    </cofactor>
    <cofactor evidence="1">
        <name>Mn(2+)</name>
        <dbReference type="ChEBI" id="CHEBI:29035"/>
    </cofactor>
    <text evidence="1">Binds 1 Mg(2+) or Mn(2+) ion per subunit.</text>
</comment>
<comment type="similarity">
    <text evidence="2">Belongs to the isocitrate and isopropylmalate dehydrogenases family.</text>
</comment>
<evidence type="ECO:0000250" key="1"/>
<evidence type="ECO:0000305" key="2"/>
<dbReference type="EC" id="1.1.1.42"/>
<dbReference type="EMBL" id="Z71285">
    <property type="protein sequence ID" value="CAA95869.1"/>
    <property type="molecule type" value="Genomic_DNA"/>
</dbReference>
<dbReference type="EMBL" id="AY693154">
    <property type="protein sequence ID" value="AAT93173.1"/>
    <property type="molecule type" value="Genomic_DNA"/>
</dbReference>
<dbReference type="EMBL" id="BK006947">
    <property type="protein sequence ID" value="DAA10534.1"/>
    <property type="molecule type" value="Genomic_DNA"/>
</dbReference>
<dbReference type="PIR" id="S62921">
    <property type="entry name" value="S62921"/>
</dbReference>
<dbReference type="RefSeq" id="NP_014389.3">
    <property type="nucleotide sequence ID" value="NM_001182848.3"/>
</dbReference>
<dbReference type="SMR" id="P53982"/>
<dbReference type="BioGRID" id="35816">
    <property type="interactions" value="102"/>
</dbReference>
<dbReference type="DIP" id="DIP-4693N"/>
<dbReference type="FunCoup" id="P53982">
    <property type="interactions" value="818"/>
</dbReference>
<dbReference type="IntAct" id="P53982">
    <property type="interactions" value="4"/>
</dbReference>
<dbReference type="MINT" id="P53982"/>
<dbReference type="STRING" id="4932.YNL009W"/>
<dbReference type="CarbonylDB" id="P53982"/>
<dbReference type="PaxDb" id="4932-YNL009W"/>
<dbReference type="PeptideAtlas" id="P53982"/>
<dbReference type="EnsemblFungi" id="YNL009W_mRNA">
    <property type="protein sequence ID" value="YNL009W"/>
    <property type="gene ID" value="YNL009W"/>
</dbReference>
<dbReference type="GeneID" id="855723"/>
<dbReference type="KEGG" id="sce:YNL009W"/>
<dbReference type="AGR" id="SGD:S000004954"/>
<dbReference type="SGD" id="S000004954">
    <property type="gene designation" value="IDP3"/>
</dbReference>
<dbReference type="VEuPathDB" id="FungiDB:YNL009W"/>
<dbReference type="eggNOG" id="KOG1526">
    <property type="taxonomic scope" value="Eukaryota"/>
</dbReference>
<dbReference type="GeneTree" id="ENSGT00390000012547"/>
<dbReference type="HOGENOM" id="CLU_023296_1_1_1"/>
<dbReference type="InParanoid" id="P53982"/>
<dbReference type="OMA" id="HNTFRYG"/>
<dbReference type="OrthoDB" id="248923at2759"/>
<dbReference type="BioCyc" id="YEAST:YNL009W-MONOMER"/>
<dbReference type="SABIO-RK" id="P53982"/>
<dbReference type="BioGRID-ORCS" id="855723">
    <property type="hits" value="0 hits in 10 CRISPR screens"/>
</dbReference>
<dbReference type="PRO" id="PR:P53982"/>
<dbReference type="Proteomes" id="UP000002311">
    <property type="component" value="Chromosome XIV"/>
</dbReference>
<dbReference type="RNAct" id="P53982">
    <property type="molecule type" value="protein"/>
</dbReference>
<dbReference type="GO" id="GO:0005737">
    <property type="term" value="C:cytoplasm"/>
    <property type="evidence" value="ECO:0000314"/>
    <property type="project" value="SGD"/>
</dbReference>
<dbReference type="GO" id="GO:0005739">
    <property type="term" value="C:mitochondrion"/>
    <property type="evidence" value="ECO:0007005"/>
    <property type="project" value="SGD"/>
</dbReference>
<dbReference type="GO" id="GO:0005777">
    <property type="term" value="C:peroxisome"/>
    <property type="evidence" value="ECO:0000314"/>
    <property type="project" value="SGD"/>
</dbReference>
<dbReference type="GO" id="GO:0004450">
    <property type="term" value="F:isocitrate dehydrogenase (NADP+) activity"/>
    <property type="evidence" value="ECO:0000314"/>
    <property type="project" value="SGD"/>
</dbReference>
<dbReference type="GO" id="GO:0000287">
    <property type="term" value="F:magnesium ion binding"/>
    <property type="evidence" value="ECO:0007669"/>
    <property type="project" value="InterPro"/>
</dbReference>
<dbReference type="GO" id="GO:0051287">
    <property type="term" value="F:NAD binding"/>
    <property type="evidence" value="ECO:0007669"/>
    <property type="project" value="InterPro"/>
</dbReference>
<dbReference type="GO" id="GO:0006635">
    <property type="term" value="P:fatty acid beta-oxidation"/>
    <property type="evidence" value="ECO:0000315"/>
    <property type="project" value="SGD"/>
</dbReference>
<dbReference type="GO" id="GO:0006097">
    <property type="term" value="P:glyoxylate cycle"/>
    <property type="evidence" value="ECO:0007669"/>
    <property type="project" value="UniProtKB-KW"/>
</dbReference>
<dbReference type="GO" id="GO:0006102">
    <property type="term" value="P:isocitrate metabolic process"/>
    <property type="evidence" value="ECO:0000318"/>
    <property type="project" value="GO_Central"/>
</dbReference>
<dbReference type="GO" id="GO:0006739">
    <property type="term" value="P:NADP metabolic process"/>
    <property type="evidence" value="ECO:0000318"/>
    <property type="project" value="GO_Central"/>
</dbReference>
<dbReference type="GO" id="GO:0006099">
    <property type="term" value="P:tricarboxylic acid cycle"/>
    <property type="evidence" value="ECO:0007669"/>
    <property type="project" value="UniProtKB-KW"/>
</dbReference>
<dbReference type="FunFam" id="3.40.718.10:FF:000002">
    <property type="entry name" value="Isocitrate dehydrogenase [NADP]"/>
    <property type="match status" value="1"/>
</dbReference>
<dbReference type="Gene3D" id="3.40.718.10">
    <property type="entry name" value="Isopropylmalate Dehydrogenase"/>
    <property type="match status" value="1"/>
</dbReference>
<dbReference type="InterPro" id="IPR019818">
    <property type="entry name" value="IsoCit/isopropylmalate_DH_CS"/>
</dbReference>
<dbReference type="InterPro" id="IPR004790">
    <property type="entry name" value="Isocitrate_DH_NADP"/>
</dbReference>
<dbReference type="InterPro" id="IPR024084">
    <property type="entry name" value="IsoPropMal-DH-like_dom"/>
</dbReference>
<dbReference type="NCBIfam" id="TIGR00127">
    <property type="entry name" value="nadp_idh_euk"/>
    <property type="match status" value="1"/>
</dbReference>
<dbReference type="NCBIfam" id="NF006156">
    <property type="entry name" value="PRK08299.1"/>
    <property type="match status" value="1"/>
</dbReference>
<dbReference type="PANTHER" id="PTHR11822:SF41">
    <property type="entry name" value="ISOCITRATE DEHYDROGENASE [NADP]-RELATED"/>
    <property type="match status" value="1"/>
</dbReference>
<dbReference type="PANTHER" id="PTHR11822">
    <property type="entry name" value="NADP-SPECIFIC ISOCITRATE DEHYDROGENASE"/>
    <property type="match status" value="1"/>
</dbReference>
<dbReference type="Pfam" id="PF00180">
    <property type="entry name" value="Iso_dh"/>
    <property type="match status" value="1"/>
</dbReference>
<dbReference type="PIRSF" id="PIRSF000108">
    <property type="entry name" value="IDH_NADP"/>
    <property type="match status" value="1"/>
</dbReference>
<dbReference type="SMART" id="SM01329">
    <property type="entry name" value="Iso_dh"/>
    <property type="match status" value="1"/>
</dbReference>
<dbReference type="SUPFAM" id="SSF53659">
    <property type="entry name" value="Isocitrate/Isopropylmalate dehydrogenase-like"/>
    <property type="match status" value="1"/>
</dbReference>
<dbReference type="PROSITE" id="PS00470">
    <property type="entry name" value="IDH_IMDH"/>
    <property type="match status" value="1"/>
</dbReference>